<keyword id="KW-1003">Cell membrane</keyword>
<keyword id="KW-1015">Disulfide bond</keyword>
<keyword id="KW-0325">Glycoprotein</keyword>
<keyword id="KW-0336">GPI-anchor</keyword>
<keyword id="KW-0393">Immunoglobulin domain</keyword>
<keyword id="KW-0449">Lipoprotein</keyword>
<keyword id="KW-0472">Membrane</keyword>
<keyword id="KW-0628">Postsynaptic cell membrane</keyword>
<keyword id="KW-1267">Proteomics identification</keyword>
<keyword id="KW-1185">Reference proteome</keyword>
<keyword id="KW-0677">Repeat</keyword>
<keyword id="KW-0732">Signal</keyword>
<keyword id="KW-0770">Synapse</keyword>
<organism>
    <name type="scientific">Homo sapiens</name>
    <name type="common">Human</name>
    <dbReference type="NCBI Taxonomy" id="9606"/>
    <lineage>
        <taxon>Eukaryota</taxon>
        <taxon>Metazoa</taxon>
        <taxon>Chordata</taxon>
        <taxon>Craniata</taxon>
        <taxon>Vertebrata</taxon>
        <taxon>Euteleostomi</taxon>
        <taxon>Mammalia</taxon>
        <taxon>Eutheria</taxon>
        <taxon>Euarchontoglires</taxon>
        <taxon>Primates</taxon>
        <taxon>Haplorrhini</taxon>
        <taxon>Catarrhini</taxon>
        <taxon>Hominidae</taxon>
        <taxon>Homo</taxon>
    </lineage>
</organism>
<reference key="1">
    <citation type="journal article" date="2005" name="DNA Res.">
        <title>Signal sequence and keyword trap in silico for selection of full-length human cDNAs encoding secretion or membrane proteins from oligo-capped cDNA libraries.</title>
        <authorList>
            <person name="Otsuki T."/>
            <person name="Ota T."/>
            <person name="Nishikawa T."/>
            <person name="Hayashi K."/>
            <person name="Suzuki Y."/>
            <person name="Yamamoto J."/>
            <person name="Wakamatsu A."/>
            <person name="Kimura K."/>
            <person name="Sakamoto K."/>
            <person name="Hatano N."/>
            <person name="Kawai Y."/>
            <person name="Ishii S."/>
            <person name="Saito K."/>
            <person name="Kojima S."/>
            <person name="Sugiyama T."/>
            <person name="Ono T."/>
            <person name="Okano K."/>
            <person name="Yoshikawa Y."/>
            <person name="Aotsuka S."/>
            <person name="Sasaki N."/>
            <person name="Hattori A."/>
            <person name="Okumura K."/>
            <person name="Nagai K."/>
            <person name="Sugano S."/>
            <person name="Isogai T."/>
        </authorList>
    </citation>
    <scope>NUCLEOTIDE SEQUENCE [LARGE SCALE MRNA]</scope>
</reference>
<reference key="2">
    <citation type="journal article" date="2006" name="Nature">
        <title>The DNA sequence and biological annotation of human chromosome 1.</title>
        <authorList>
            <person name="Gregory S.G."/>
            <person name="Barlow K.F."/>
            <person name="McLay K.E."/>
            <person name="Kaul R."/>
            <person name="Swarbreck D."/>
            <person name="Dunham A."/>
            <person name="Scott C.E."/>
            <person name="Howe K.L."/>
            <person name="Woodfine K."/>
            <person name="Spencer C.C.A."/>
            <person name="Jones M.C."/>
            <person name="Gillson C."/>
            <person name="Searle S."/>
            <person name="Zhou Y."/>
            <person name="Kokocinski F."/>
            <person name="McDonald L."/>
            <person name="Evans R."/>
            <person name="Phillips K."/>
            <person name="Atkinson A."/>
            <person name="Cooper R."/>
            <person name="Jones C."/>
            <person name="Hall R.E."/>
            <person name="Andrews T.D."/>
            <person name="Lloyd C."/>
            <person name="Ainscough R."/>
            <person name="Almeida J.P."/>
            <person name="Ambrose K.D."/>
            <person name="Anderson F."/>
            <person name="Andrew R.W."/>
            <person name="Ashwell R.I.S."/>
            <person name="Aubin K."/>
            <person name="Babbage A.K."/>
            <person name="Bagguley C.L."/>
            <person name="Bailey J."/>
            <person name="Beasley H."/>
            <person name="Bethel G."/>
            <person name="Bird C.P."/>
            <person name="Bray-Allen S."/>
            <person name="Brown J.Y."/>
            <person name="Brown A.J."/>
            <person name="Buckley D."/>
            <person name="Burton J."/>
            <person name="Bye J."/>
            <person name="Carder C."/>
            <person name="Chapman J.C."/>
            <person name="Clark S.Y."/>
            <person name="Clarke G."/>
            <person name="Clee C."/>
            <person name="Cobley V."/>
            <person name="Collier R.E."/>
            <person name="Corby N."/>
            <person name="Coville G.J."/>
            <person name="Davies J."/>
            <person name="Deadman R."/>
            <person name="Dunn M."/>
            <person name="Earthrowl M."/>
            <person name="Ellington A.G."/>
            <person name="Errington H."/>
            <person name="Frankish A."/>
            <person name="Frankland J."/>
            <person name="French L."/>
            <person name="Garner P."/>
            <person name="Garnett J."/>
            <person name="Gay L."/>
            <person name="Ghori M.R.J."/>
            <person name="Gibson R."/>
            <person name="Gilby L.M."/>
            <person name="Gillett W."/>
            <person name="Glithero R.J."/>
            <person name="Grafham D.V."/>
            <person name="Griffiths C."/>
            <person name="Griffiths-Jones S."/>
            <person name="Grocock R."/>
            <person name="Hammond S."/>
            <person name="Harrison E.S.I."/>
            <person name="Hart E."/>
            <person name="Haugen E."/>
            <person name="Heath P.D."/>
            <person name="Holmes S."/>
            <person name="Holt K."/>
            <person name="Howden P.J."/>
            <person name="Hunt A.R."/>
            <person name="Hunt S.E."/>
            <person name="Hunter G."/>
            <person name="Isherwood J."/>
            <person name="James R."/>
            <person name="Johnson C."/>
            <person name="Johnson D."/>
            <person name="Joy A."/>
            <person name="Kay M."/>
            <person name="Kershaw J.K."/>
            <person name="Kibukawa M."/>
            <person name="Kimberley A.M."/>
            <person name="King A."/>
            <person name="Knights A.J."/>
            <person name="Lad H."/>
            <person name="Laird G."/>
            <person name="Lawlor S."/>
            <person name="Leongamornlert D.A."/>
            <person name="Lloyd D.M."/>
            <person name="Loveland J."/>
            <person name="Lovell J."/>
            <person name="Lush M.J."/>
            <person name="Lyne R."/>
            <person name="Martin S."/>
            <person name="Mashreghi-Mohammadi M."/>
            <person name="Matthews L."/>
            <person name="Matthews N.S.W."/>
            <person name="McLaren S."/>
            <person name="Milne S."/>
            <person name="Mistry S."/>
            <person name="Moore M.J.F."/>
            <person name="Nickerson T."/>
            <person name="O'Dell C.N."/>
            <person name="Oliver K."/>
            <person name="Palmeiri A."/>
            <person name="Palmer S.A."/>
            <person name="Parker A."/>
            <person name="Patel D."/>
            <person name="Pearce A.V."/>
            <person name="Peck A.I."/>
            <person name="Pelan S."/>
            <person name="Phelps K."/>
            <person name="Phillimore B.J."/>
            <person name="Plumb R."/>
            <person name="Rajan J."/>
            <person name="Raymond C."/>
            <person name="Rouse G."/>
            <person name="Saenphimmachak C."/>
            <person name="Sehra H.K."/>
            <person name="Sheridan E."/>
            <person name="Shownkeen R."/>
            <person name="Sims S."/>
            <person name="Skuce C.D."/>
            <person name="Smith M."/>
            <person name="Steward C."/>
            <person name="Subramanian S."/>
            <person name="Sycamore N."/>
            <person name="Tracey A."/>
            <person name="Tromans A."/>
            <person name="Van Helmond Z."/>
            <person name="Wall M."/>
            <person name="Wallis J.M."/>
            <person name="White S."/>
            <person name="Whitehead S.L."/>
            <person name="Wilkinson J.E."/>
            <person name="Willey D.L."/>
            <person name="Williams H."/>
            <person name="Wilming L."/>
            <person name="Wray P.W."/>
            <person name="Wu Z."/>
            <person name="Coulson A."/>
            <person name="Vaudin M."/>
            <person name="Sulston J.E."/>
            <person name="Durbin R.M."/>
            <person name="Hubbard T."/>
            <person name="Wooster R."/>
            <person name="Dunham I."/>
            <person name="Carter N.P."/>
            <person name="McVean G."/>
            <person name="Ross M.T."/>
            <person name="Harrow J."/>
            <person name="Olson M.V."/>
            <person name="Beck S."/>
            <person name="Rogers J."/>
            <person name="Bentley D.R."/>
        </authorList>
    </citation>
    <scope>NUCLEOTIDE SEQUENCE [LARGE SCALE GENOMIC DNA]</scope>
</reference>
<reference key="3">
    <citation type="journal article" date="2004" name="Genome Res.">
        <title>The status, quality, and expansion of the NIH full-length cDNA project: the Mammalian Gene Collection (MGC).</title>
        <authorList>
            <consortium name="The MGC Project Team"/>
        </authorList>
    </citation>
    <scope>NUCLEOTIDE SEQUENCE [LARGE SCALE MRNA]</scope>
    <source>
        <tissue>Eye</tissue>
    </source>
</reference>
<reference key="4">
    <citation type="journal article" date="2006" name="Science">
        <title>The consensus coding sequences of human breast and colorectal cancers.</title>
        <authorList>
            <person name="Sjoeblom T."/>
            <person name="Jones S."/>
            <person name="Wood L.D."/>
            <person name="Parsons D.W."/>
            <person name="Lin J."/>
            <person name="Barber T.D."/>
            <person name="Mandelker D."/>
            <person name="Leary R.J."/>
            <person name="Ptak J."/>
            <person name="Silliman N."/>
            <person name="Szabo S."/>
            <person name="Buckhaults P."/>
            <person name="Farrell C."/>
            <person name="Meeh P."/>
            <person name="Markowitz S.D."/>
            <person name="Willis J."/>
            <person name="Dawson D."/>
            <person name="Willson J.K.V."/>
            <person name="Gazdar A.F."/>
            <person name="Hartigan J."/>
            <person name="Wu L."/>
            <person name="Liu C."/>
            <person name="Parmigiani G."/>
            <person name="Park B.H."/>
            <person name="Bachman K.E."/>
            <person name="Papadopoulos N."/>
            <person name="Vogelstein B."/>
            <person name="Kinzler K.W."/>
            <person name="Velculescu V.E."/>
        </authorList>
    </citation>
    <scope>VARIANT [LARGE SCALE ANALYSIS] MET-467</scope>
</reference>
<proteinExistence type="evidence at protein level"/>
<name>IGS21_HUMAN</name>
<feature type="signal peptide" evidence="2">
    <location>
        <begin position="1"/>
        <end position="24"/>
    </location>
</feature>
<feature type="chain" id="PRO_0000223338" description="Immunoglobulin superfamily member 21">
    <location>
        <begin position="25"/>
        <end position="467"/>
    </location>
</feature>
<feature type="domain" description="Ig-like 1">
    <location>
        <begin position="25"/>
        <end position="132"/>
    </location>
</feature>
<feature type="domain" description="Ig-like 2">
    <location>
        <begin position="344"/>
        <end position="429"/>
    </location>
</feature>
<feature type="region of interest" description="Disordered" evidence="4">
    <location>
        <begin position="229"/>
        <end position="259"/>
    </location>
</feature>
<feature type="compositionally biased region" description="Basic and acidic residues" evidence="4">
    <location>
        <begin position="234"/>
        <end position="247"/>
    </location>
</feature>
<feature type="glycosylation site" description="N-linked (GlcNAc...) asparagine" evidence="2">
    <location>
        <position position="82"/>
    </location>
</feature>
<feature type="glycosylation site" description="N-linked (GlcNAc...) asparagine" evidence="2">
    <location>
        <position position="165"/>
    </location>
</feature>
<feature type="glycosylation site" description="N-linked (GlcNAc...) asparagine" evidence="2">
    <location>
        <position position="407"/>
    </location>
</feature>
<feature type="glycosylation site" description="N-linked (GlcNAc...) asparagine" evidence="2">
    <location>
        <position position="444"/>
    </location>
</feature>
<feature type="disulfide bond" evidence="3">
    <location>
        <begin position="46"/>
        <end position="116"/>
    </location>
</feature>
<feature type="sequence variant" id="VAR_056049" description="In dbSNP:rs2355877.">
    <original>R</original>
    <variation>H</variation>
    <location>
        <position position="245"/>
    </location>
</feature>
<feature type="sequence variant" id="VAR_056050" description="In dbSNP:rs12076815.">
    <original>T</original>
    <variation>M</variation>
    <location>
        <position position="379"/>
    </location>
</feature>
<feature type="sequence variant" id="VAR_035518" description="In a colorectal cancer sample; somatic mutation; dbSNP:rs766575681." evidence="5">
    <original>T</original>
    <variation>M</variation>
    <location>
        <position position="467"/>
    </location>
</feature>
<feature type="sequence conflict" description="In Ref. 1; BAC11542." evidence="6" ref="1">
    <original>E</original>
    <variation>G</variation>
    <location>
        <position position="369"/>
    </location>
</feature>
<comment type="function">
    <text evidence="1">Involved in synaptic inhibition in the brain. Selectively regulates inhibitory presynaptic differentiation through interacting with presynaptic NRXN2.</text>
</comment>
<comment type="subunit">
    <text evidence="1">Interacts (Ig-like 1 domain) with NRXN2 (via Laminin G-like 1 domain) in a trans-interaction manner.</text>
</comment>
<comment type="subcellular location">
    <subcellularLocation>
        <location evidence="1">Postsynaptic cell membrane</location>
        <topology evidence="1">Lipid-anchor</topology>
        <topology evidence="1">GPI-anchor</topology>
    </subcellularLocation>
</comment>
<comment type="domain">
    <text evidence="1">Ig-like 1 domain is indispensable for synaptogenic activity whereas Ig-like 2 domain is secondarily responsible for the activity.</text>
</comment>
<accession>Q96ID5</accession>
<accession>Q8NBR8</accession>
<dbReference type="EMBL" id="AK075316">
    <property type="protein sequence ID" value="BAC11542.1"/>
    <property type="molecule type" value="mRNA"/>
</dbReference>
<dbReference type="EMBL" id="AL356101">
    <property type="status" value="NOT_ANNOTATED_CDS"/>
    <property type="molecule type" value="Genomic_DNA"/>
</dbReference>
<dbReference type="EMBL" id="AL359738">
    <property type="status" value="NOT_ANNOTATED_CDS"/>
    <property type="molecule type" value="Genomic_DNA"/>
</dbReference>
<dbReference type="EMBL" id="AL365209">
    <property type="status" value="NOT_ANNOTATED_CDS"/>
    <property type="molecule type" value="Genomic_DNA"/>
</dbReference>
<dbReference type="EMBL" id="AL050342">
    <property type="status" value="NOT_ANNOTATED_CDS"/>
    <property type="molecule type" value="Genomic_DNA"/>
</dbReference>
<dbReference type="EMBL" id="BC007618">
    <property type="protein sequence ID" value="AAH07618.1"/>
    <property type="molecule type" value="mRNA"/>
</dbReference>
<dbReference type="CCDS" id="CCDS184.1"/>
<dbReference type="RefSeq" id="NP_116269.3">
    <property type="nucleotide sequence ID" value="NM_032880.4"/>
</dbReference>
<dbReference type="BioGRID" id="124396">
    <property type="interactions" value="43"/>
</dbReference>
<dbReference type="FunCoup" id="Q96ID5">
    <property type="interactions" value="365"/>
</dbReference>
<dbReference type="IntAct" id="Q96ID5">
    <property type="interactions" value="39"/>
</dbReference>
<dbReference type="MINT" id="Q96ID5"/>
<dbReference type="STRING" id="9606.ENSP00000251296"/>
<dbReference type="GlyCosmos" id="Q96ID5">
    <property type="glycosylation" value="4 sites, No reported glycans"/>
</dbReference>
<dbReference type="GlyGen" id="Q96ID5">
    <property type="glycosylation" value="6 sites, 1 O-linked glycan (1 site)"/>
</dbReference>
<dbReference type="iPTMnet" id="Q96ID5"/>
<dbReference type="PhosphoSitePlus" id="Q96ID5"/>
<dbReference type="BioMuta" id="IGSF21"/>
<dbReference type="DMDM" id="74760871"/>
<dbReference type="MassIVE" id="Q96ID5"/>
<dbReference type="PaxDb" id="9606-ENSP00000251296"/>
<dbReference type="PeptideAtlas" id="Q96ID5"/>
<dbReference type="ProteomicsDB" id="76824"/>
<dbReference type="Antibodypedia" id="29423">
    <property type="antibodies" value="78 antibodies from 19 providers"/>
</dbReference>
<dbReference type="DNASU" id="84966"/>
<dbReference type="Ensembl" id="ENST00000251296.4">
    <property type="protein sequence ID" value="ENSP00000251296.1"/>
    <property type="gene ID" value="ENSG00000117154.12"/>
</dbReference>
<dbReference type="GeneID" id="84966"/>
<dbReference type="KEGG" id="hsa:84966"/>
<dbReference type="MANE-Select" id="ENST00000251296.4">
    <property type="protein sequence ID" value="ENSP00000251296.1"/>
    <property type="RefSeq nucleotide sequence ID" value="NM_032880.5"/>
    <property type="RefSeq protein sequence ID" value="NP_116269.3"/>
</dbReference>
<dbReference type="UCSC" id="uc001bau.3">
    <property type="organism name" value="human"/>
</dbReference>
<dbReference type="AGR" id="HGNC:28246"/>
<dbReference type="CTD" id="84966"/>
<dbReference type="DisGeNET" id="84966"/>
<dbReference type="GeneCards" id="IGSF21"/>
<dbReference type="HGNC" id="HGNC:28246">
    <property type="gene designation" value="IGSF21"/>
</dbReference>
<dbReference type="HPA" id="ENSG00000117154">
    <property type="expression patterns" value="Tissue enriched (brain)"/>
</dbReference>
<dbReference type="neXtProt" id="NX_Q96ID5"/>
<dbReference type="OpenTargets" id="ENSG00000117154"/>
<dbReference type="PharmGKB" id="PA142671661"/>
<dbReference type="VEuPathDB" id="HostDB:ENSG00000117154"/>
<dbReference type="eggNOG" id="ENOG502QQMY">
    <property type="taxonomic scope" value="Eukaryota"/>
</dbReference>
<dbReference type="GeneTree" id="ENSGT00390000002421"/>
<dbReference type="HOGENOM" id="CLU_054054_0_0_1"/>
<dbReference type="InParanoid" id="Q96ID5"/>
<dbReference type="OMA" id="YTEHPSR"/>
<dbReference type="OrthoDB" id="9940999at2759"/>
<dbReference type="PAN-GO" id="Q96ID5">
    <property type="GO annotations" value="3 GO annotations based on evolutionary models"/>
</dbReference>
<dbReference type="PhylomeDB" id="Q96ID5"/>
<dbReference type="TreeFam" id="TF331223"/>
<dbReference type="PathwayCommons" id="Q96ID5"/>
<dbReference type="SignaLink" id="Q96ID5"/>
<dbReference type="BioGRID-ORCS" id="84966">
    <property type="hits" value="7 hits in 1139 CRISPR screens"/>
</dbReference>
<dbReference type="CD-CODE" id="FB4E32DD">
    <property type="entry name" value="Presynaptic clusters and postsynaptic densities"/>
</dbReference>
<dbReference type="ChiTaRS" id="IGSF21">
    <property type="organism name" value="human"/>
</dbReference>
<dbReference type="GenomeRNAi" id="84966"/>
<dbReference type="Pharos" id="Q96ID5">
    <property type="development level" value="Tdark"/>
</dbReference>
<dbReference type="PRO" id="PR:Q96ID5"/>
<dbReference type="Proteomes" id="UP000005640">
    <property type="component" value="Chromosome 1"/>
</dbReference>
<dbReference type="RNAct" id="Q96ID5">
    <property type="molecule type" value="protein"/>
</dbReference>
<dbReference type="Bgee" id="ENSG00000117154">
    <property type="expression patterns" value="Expressed in right hemisphere of cerebellum and 118 other cell types or tissues"/>
</dbReference>
<dbReference type="GO" id="GO:0005912">
    <property type="term" value="C:adherens junction"/>
    <property type="evidence" value="ECO:0000318"/>
    <property type="project" value="GO_Central"/>
</dbReference>
<dbReference type="GO" id="GO:0009897">
    <property type="term" value="C:external side of plasma membrane"/>
    <property type="evidence" value="ECO:0000250"/>
    <property type="project" value="UniProtKB"/>
</dbReference>
<dbReference type="GO" id="GO:0060077">
    <property type="term" value="C:inhibitory synapse"/>
    <property type="evidence" value="ECO:0000250"/>
    <property type="project" value="UniProtKB"/>
</dbReference>
<dbReference type="GO" id="GO:0098839">
    <property type="term" value="C:postsynaptic density membrane"/>
    <property type="evidence" value="ECO:0007669"/>
    <property type="project" value="Ensembl"/>
</dbReference>
<dbReference type="GO" id="GO:0042734">
    <property type="term" value="C:presynaptic membrane"/>
    <property type="evidence" value="ECO:0000250"/>
    <property type="project" value="UniProtKB"/>
</dbReference>
<dbReference type="GO" id="GO:0007157">
    <property type="term" value="P:heterophilic cell-cell adhesion via plasma membrane cell adhesion molecules"/>
    <property type="evidence" value="ECO:0000318"/>
    <property type="project" value="GO_Central"/>
</dbReference>
<dbReference type="GO" id="GO:0007156">
    <property type="term" value="P:homophilic cell adhesion via plasma membrane adhesion molecules"/>
    <property type="evidence" value="ECO:0000318"/>
    <property type="project" value="GO_Central"/>
</dbReference>
<dbReference type="GO" id="GO:0060074">
    <property type="term" value="P:synapse maturation"/>
    <property type="evidence" value="ECO:0000250"/>
    <property type="project" value="UniProtKB"/>
</dbReference>
<dbReference type="GO" id="GO:0099550">
    <property type="term" value="P:trans-synaptic signaling, modulating synaptic transmission"/>
    <property type="evidence" value="ECO:0007669"/>
    <property type="project" value="Ensembl"/>
</dbReference>
<dbReference type="FunFam" id="2.60.40.10:FF:000509">
    <property type="entry name" value="Immunoglobin superfamily member 21"/>
    <property type="match status" value="1"/>
</dbReference>
<dbReference type="FunFam" id="2.60.40.10:FF:000858">
    <property type="entry name" value="Immunoglobin superfamily member 21"/>
    <property type="match status" value="1"/>
</dbReference>
<dbReference type="Gene3D" id="2.60.40.10">
    <property type="entry name" value="Immunoglobulins"/>
    <property type="match status" value="3"/>
</dbReference>
<dbReference type="InterPro" id="IPR007110">
    <property type="entry name" value="Ig-like_dom"/>
</dbReference>
<dbReference type="InterPro" id="IPR036179">
    <property type="entry name" value="Ig-like_dom_sf"/>
</dbReference>
<dbReference type="InterPro" id="IPR013783">
    <property type="entry name" value="Ig-like_fold"/>
</dbReference>
<dbReference type="InterPro" id="IPR003599">
    <property type="entry name" value="Ig_sub"/>
</dbReference>
<dbReference type="InterPro" id="IPR013106">
    <property type="entry name" value="Ig_V-set"/>
</dbReference>
<dbReference type="InterPro" id="IPR051427">
    <property type="entry name" value="Nectin/Nectin-like"/>
</dbReference>
<dbReference type="PANTHER" id="PTHR23277:SF121">
    <property type="entry name" value="IMMUNOGLOBULIN SUPERFAMILY MEMBER 21"/>
    <property type="match status" value="1"/>
</dbReference>
<dbReference type="PANTHER" id="PTHR23277">
    <property type="entry name" value="NECTIN-RELATED"/>
    <property type="match status" value="1"/>
</dbReference>
<dbReference type="Pfam" id="PF07686">
    <property type="entry name" value="V-set"/>
    <property type="match status" value="1"/>
</dbReference>
<dbReference type="SMART" id="SM00409">
    <property type="entry name" value="IG"/>
    <property type="match status" value="2"/>
</dbReference>
<dbReference type="SUPFAM" id="SSF48726">
    <property type="entry name" value="Immunoglobulin"/>
    <property type="match status" value="3"/>
</dbReference>
<dbReference type="PROSITE" id="PS50835">
    <property type="entry name" value="IG_LIKE"/>
    <property type="match status" value="2"/>
</dbReference>
<protein>
    <recommendedName>
        <fullName evidence="6">Immunoglobulin superfamily member 21</fullName>
        <shortName evidence="6">IgSF21</shortName>
    </recommendedName>
</protein>
<gene>
    <name evidence="7" type="primary">IGSF21</name>
</gene>
<sequence>MRTAPSLRRCVCLLLAAILDLARGYLTVNIEPLPPVVAGDAVTLKCNFKTDGRMREIVWYRVTDGGTIKQKIFTFDAMFSTNYSHMENYRKREDLVYQSTVRLPEVRISDNGPYECHVGIYDRATREKVVLASGNIFLNVMAPPTSIEVVAADTPAPFSRYQAQNFTLVCIVSGGKPAPMVYFKRDGEPIDAVPLSEPPAASSGPLQDSRPFRSLLHRDLDDTKMQKSLSLLDAENRGGRPYTERPSRGLTPDPNILLQPTTENIPETVVSREFPRWVHSAEPTYFLRHSRTPSSDGTVEVRALLTWTLNPQIDNEALFSCEVKHPALSMPMQAEVTLVAPKGPKIVMTPSRARVGDTVRILVHGFQNEVFPEPMFTWTRVGSRLLDGSAEFDGKELVLERVPAELNGSMYRCTAQNPLGSTDTHTRLIVFENPNIPRGTEDSNGSIGPTGARLTLVLALTVILELT</sequence>
<evidence type="ECO:0000250" key="1">
    <source>
        <dbReference type="UniProtKB" id="Q7TNR6"/>
    </source>
</evidence>
<evidence type="ECO:0000255" key="2"/>
<evidence type="ECO:0000255" key="3">
    <source>
        <dbReference type="PROSITE-ProRule" id="PRU00114"/>
    </source>
</evidence>
<evidence type="ECO:0000256" key="4">
    <source>
        <dbReference type="SAM" id="MobiDB-lite"/>
    </source>
</evidence>
<evidence type="ECO:0000269" key="5">
    <source>
    </source>
</evidence>
<evidence type="ECO:0000305" key="6"/>
<evidence type="ECO:0000312" key="7">
    <source>
        <dbReference type="HGNC" id="HGNC:28246"/>
    </source>
</evidence>